<protein>
    <recommendedName>
        <fullName evidence="1">Adenylyl-sulfate kinase</fullName>
        <ecNumber evidence="1">2.7.1.25</ecNumber>
    </recommendedName>
    <alternativeName>
        <fullName evidence="1">APS kinase</fullName>
    </alternativeName>
    <alternativeName>
        <fullName evidence="1">ATP adenosine-5'-phosphosulfate 3'-phosphotransferase</fullName>
    </alternativeName>
    <alternativeName>
        <fullName evidence="1">Adenosine-5'-phosphosulfate kinase</fullName>
    </alternativeName>
</protein>
<comment type="function">
    <text evidence="1">Catalyzes the synthesis of activated sulfate.</text>
</comment>
<comment type="catalytic activity">
    <reaction evidence="1">
        <text>adenosine 5'-phosphosulfate + ATP = 3'-phosphoadenylyl sulfate + ADP + H(+)</text>
        <dbReference type="Rhea" id="RHEA:24152"/>
        <dbReference type="ChEBI" id="CHEBI:15378"/>
        <dbReference type="ChEBI" id="CHEBI:30616"/>
        <dbReference type="ChEBI" id="CHEBI:58243"/>
        <dbReference type="ChEBI" id="CHEBI:58339"/>
        <dbReference type="ChEBI" id="CHEBI:456216"/>
        <dbReference type="EC" id="2.7.1.25"/>
    </reaction>
</comment>
<comment type="pathway">
    <text evidence="1">Sulfur metabolism; hydrogen sulfide biosynthesis; sulfite from sulfate: step 2/3.</text>
</comment>
<comment type="similarity">
    <text evidence="1">Belongs to the APS kinase family.</text>
</comment>
<sequence length="201" mass="22674">MEEKNHIYPIFDRMMTREDKEELLGQHSVMIWFTGLSGSGKSTIAIALERELHKRGLLCRILDGDNIRSGINNNLGFSETDRVENIRRIAEVSKLFLDSGIITIAAFISPNNDIREMAANIIGKDDFLEVFVSTPLEECEKRDVKGLYAKARKGEIQNFTGISAPFEVPEHPALALDTSKLSLEESVNRLLEMVLPKIEKK</sequence>
<dbReference type="EC" id="2.7.1.25" evidence="1"/>
<dbReference type="EMBL" id="AE015928">
    <property type="protein sequence ID" value="AAO75520.1"/>
    <property type="molecule type" value="Genomic_DNA"/>
</dbReference>
<dbReference type="RefSeq" id="NP_809326.1">
    <property type="nucleotide sequence ID" value="NC_004663.1"/>
</dbReference>
<dbReference type="RefSeq" id="WP_011107257.1">
    <property type="nucleotide sequence ID" value="NC_004663.1"/>
</dbReference>
<dbReference type="SMR" id="Q8AAQ1"/>
<dbReference type="FunCoup" id="Q8AAQ1">
    <property type="interactions" value="120"/>
</dbReference>
<dbReference type="STRING" id="226186.BT_0413"/>
<dbReference type="PaxDb" id="226186-BT_0413"/>
<dbReference type="EnsemblBacteria" id="AAO75520">
    <property type="protein sequence ID" value="AAO75520"/>
    <property type="gene ID" value="BT_0413"/>
</dbReference>
<dbReference type="GeneID" id="60926371"/>
<dbReference type="KEGG" id="bth:BT_0413"/>
<dbReference type="PATRIC" id="fig|226186.12.peg.410"/>
<dbReference type="eggNOG" id="COG0529">
    <property type="taxonomic scope" value="Bacteria"/>
</dbReference>
<dbReference type="HOGENOM" id="CLU_046932_1_0_10"/>
<dbReference type="InParanoid" id="Q8AAQ1"/>
<dbReference type="OrthoDB" id="9804504at2"/>
<dbReference type="UniPathway" id="UPA00140">
    <property type="reaction ID" value="UER00205"/>
</dbReference>
<dbReference type="Proteomes" id="UP000001414">
    <property type="component" value="Chromosome"/>
</dbReference>
<dbReference type="GO" id="GO:0004020">
    <property type="term" value="F:adenylylsulfate kinase activity"/>
    <property type="evidence" value="ECO:0000318"/>
    <property type="project" value="GO_Central"/>
</dbReference>
<dbReference type="GO" id="GO:0005524">
    <property type="term" value="F:ATP binding"/>
    <property type="evidence" value="ECO:0007669"/>
    <property type="project" value="UniProtKB-UniRule"/>
</dbReference>
<dbReference type="GO" id="GO:0070814">
    <property type="term" value="P:hydrogen sulfide biosynthetic process"/>
    <property type="evidence" value="ECO:0007669"/>
    <property type="project" value="UniProtKB-UniRule"/>
</dbReference>
<dbReference type="GO" id="GO:0000103">
    <property type="term" value="P:sulfate assimilation"/>
    <property type="evidence" value="ECO:0000318"/>
    <property type="project" value="GO_Central"/>
</dbReference>
<dbReference type="CDD" id="cd02027">
    <property type="entry name" value="APSK"/>
    <property type="match status" value="1"/>
</dbReference>
<dbReference type="FunFam" id="3.40.50.300:FF:001219">
    <property type="entry name" value="Adenylyl-sulfate kinase"/>
    <property type="match status" value="1"/>
</dbReference>
<dbReference type="Gene3D" id="3.40.50.300">
    <property type="entry name" value="P-loop containing nucleotide triphosphate hydrolases"/>
    <property type="match status" value="1"/>
</dbReference>
<dbReference type="HAMAP" id="MF_00065">
    <property type="entry name" value="Adenylyl_sulf_kinase"/>
    <property type="match status" value="1"/>
</dbReference>
<dbReference type="InterPro" id="IPR002891">
    <property type="entry name" value="APS_kinase"/>
</dbReference>
<dbReference type="InterPro" id="IPR027417">
    <property type="entry name" value="P-loop_NTPase"/>
</dbReference>
<dbReference type="NCBIfam" id="TIGR00455">
    <property type="entry name" value="apsK"/>
    <property type="match status" value="1"/>
</dbReference>
<dbReference type="NCBIfam" id="NF003013">
    <property type="entry name" value="PRK03846.1"/>
    <property type="match status" value="1"/>
</dbReference>
<dbReference type="PANTHER" id="PTHR11055">
    <property type="entry name" value="BIFUNCTIONAL 3'-PHOSPHOADENOSINE 5'-PHOSPHOSULFATE SYNTHASE"/>
    <property type="match status" value="1"/>
</dbReference>
<dbReference type="PANTHER" id="PTHR11055:SF1">
    <property type="entry name" value="PAPS SYNTHETASE, ISOFORM D"/>
    <property type="match status" value="1"/>
</dbReference>
<dbReference type="Pfam" id="PF01583">
    <property type="entry name" value="APS_kinase"/>
    <property type="match status" value="1"/>
</dbReference>
<dbReference type="SUPFAM" id="SSF52540">
    <property type="entry name" value="P-loop containing nucleoside triphosphate hydrolases"/>
    <property type="match status" value="1"/>
</dbReference>
<name>CYSC_BACTN</name>
<reference key="1">
    <citation type="journal article" date="2003" name="Science">
        <title>A genomic view of the human-Bacteroides thetaiotaomicron symbiosis.</title>
        <authorList>
            <person name="Xu J."/>
            <person name="Bjursell M.K."/>
            <person name="Himrod J."/>
            <person name="Deng S."/>
            <person name="Carmichael L.K."/>
            <person name="Chiang H.C."/>
            <person name="Hooper L.V."/>
            <person name="Gordon J.I."/>
        </authorList>
    </citation>
    <scope>NUCLEOTIDE SEQUENCE [LARGE SCALE GENOMIC DNA]</scope>
    <source>
        <strain>ATCC 29148 / DSM 2079 / JCM 5827 / CCUG 10774 / NCTC 10582 / VPI-5482 / E50</strain>
    </source>
</reference>
<gene>
    <name evidence="1" type="primary">cysC</name>
    <name type="ordered locus">BT_0413</name>
</gene>
<feature type="chain" id="PRO_1000202407" description="Adenylyl-sulfate kinase">
    <location>
        <begin position="1"/>
        <end position="201"/>
    </location>
</feature>
<feature type="active site" description="Phosphoserine intermediate" evidence="1">
    <location>
        <position position="109"/>
    </location>
</feature>
<feature type="binding site" evidence="1">
    <location>
        <begin position="35"/>
        <end position="42"/>
    </location>
    <ligand>
        <name>ATP</name>
        <dbReference type="ChEBI" id="CHEBI:30616"/>
    </ligand>
</feature>
<keyword id="KW-0067">ATP-binding</keyword>
<keyword id="KW-0418">Kinase</keyword>
<keyword id="KW-0547">Nucleotide-binding</keyword>
<keyword id="KW-0597">Phosphoprotein</keyword>
<keyword id="KW-1185">Reference proteome</keyword>
<keyword id="KW-0808">Transferase</keyword>
<proteinExistence type="inferred from homology"/>
<organism>
    <name type="scientific">Bacteroides thetaiotaomicron (strain ATCC 29148 / DSM 2079 / JCM 5827 / CCUG 10774 / NCTC 10582 / VPI-5482 / E50)</name>
    <dbReference type="NCBI Taxonomy" id="226186"/>
    <lineage>
        <taxon>Bacteria</taxon>
        <taxon>Pseudomonadati</taxon>
        <taxon>Bacteroidota</taxon>
        <taxon>Bacteroidia</taxon>
        <taxon>Bacteroidales</taxon>
        <taxon>Bacteroidaceae</taxon>
        <taxon>Bacteroides</taxon>
    </lineage>
</organism>
<evidence type="ECO:0000255" key="1">
    <source>
        <dbReference type="HAMAP-Rule" id="MF_00065"/>
    </source>
</evidence>
<accession>Q8AAQ1</accession>